<proteinExistence type="evidence at transcript level"/>
<keyword id="KW-0032">Aminotransferase</keyword>
<keyword id="KW-0496">Mitochondrion</keyword>
<keyword id="KW-0663">Pyridoxal phosphate</keyword>
<keyword id="KW-1185">Reference proteome</keyword>
<keyword id="KW-0808">Transferase</keyword>
<keyword id="KW-0809">Transit peptide</keyword>
<feature type="transit peptide" description="Mitochondrion" evidence="2">
    <location>
        <begin position="1"/>
        <end position="32"/>
    </location>
</feature>
<feature type="chain" id="PRO_0000421299" description="Ornithine aminotransferase, mitochondrial">
    <location>
        <begin position="33"/>
        <end position="473"/>
    </location>
</feature>
<feature type="modified residue" description="N6-(pyridoxal phosphate)lysine" evidence="1">
    <location>
        <position position="293"/>
    </location>
</feature>
<protein>
    <recommendedName>
        <fullName>Ornithine aminotransferase, mitochondrial</fullName>
        <ecNumber>2.6.1.13</ecNumber>
    </recommendedName>
    <alternativeName>
        <fullName>Ornithine delta-aminotransferase</fullName>
    </alternativeName>
    <alternativeName>
        <fullName>Ornithine--oxo-acid aminotransferase</fullName>
    </alternativeName>
</protein>
<accession>Q10G56</accession>
<accession>A0A0N7KHQ2</accession>
<accession>Q60DP3</accession>
<name>OAT_ORYSJ</name>
<comment type="function">
    <text evidence="3">Confers drought and oxidative stress tolerance mainly through enhancing ROS-scavenging capacity and Pro pre-accumulation.</text>
</comment>
<comment type="catalytic activity">
    <reaction>
        <text>a 2-oxocarboxylate + L-ornithine = L-glutamate 5-semialdehyde + an L-alpha-amino acid</text>
        <dbReference type="Rhea" id="RHEA:13877"/>
        <dbReference type="ChEBI" id="CHEBI:35179"/>
        <dbReference type="ChEBI" id="CHEBI:46911"/>
        <dbReference type="ChEBI" id="CHEBI:58066"/>
        <dbReference type="ChEBI" id="CHEBI:59869"/>
        <dbReference type="EC" id="2.6.1.13"/>
    </reaction>
</comment>
<comment type="cofactor">
    <cofactor evidence="1">
        <name>pyridoxal 5'-phosphate</name>
        <dbReference type="ChEBI" id="CHEBI:597326"/>
    </cofactor>
</comment>
<comment type="pathway">
    <text>Amino-acid biosynthesis; L-proline biosynthesis; L-glutamate 5-semialdehyde from L-ornithine: step 1/1.</text>
</comment>
<comment type="subunit">
    <text evidence="1">Homotetramer.</text>
</comment>
<comment type="subcellular location">
    <subcellularLocation>
        <location evidence="1">Mitochondrion matrix</location>
    </subcellularLocation>
</comment>
<comment type="induction">
    <text evidence="3">Up-regulated by SNAC2. Also induced by high-salinity, heat, and submergence. Strongly induced by abscisic acid (ABA) and auxin (IAA), and slightly induced by brassinosteroid (BR) and jasmonic acid (JA).</text>
</comment>
<comment type="similarity">
    <text evidence="4">Belongs to the class-III pyridoxal-phosphate-dependent aminotransferase family.</text>
</comment>
<comment type="sequence caution" evidence="4">
    <conflict type="erroneous gene model prediction">
        <sequence resource="EMBL-CDS" id="AAU90265"/>
    </conflict>
</comment>
<organism>
    <name type="scientific">Oryza sativa subsp. japonica</name>
    <name type="common">Rice</name>
    <dbReference type="NCBI Taxonomy" id="39947"/>
    <lineage>
        <taxon>Eukaryota</taxon>
        <taxon>Viridiplantae</taxon>
        <taxon>Streptophyta</taxon>
        <taxon>Embryophyta</taxon>
        <taxon>Tracheophyta</taxon>
        <taxon>Spermatophyta</taxon>
        <taxon>Magnoliopsida</taxon>
        <taxon>Liliopsida</taxon>
        <taxon>Poales</taxon>
        <taxon>Poaceae</taxon>
        <taxon>BOP clade</taxon>
        <taxon>Oryzoideae</taxon>
        <taxon>Oryzeae</taxon>
        <taxon>Oryzinae</taxon>
        <taxon>Oryza</taxon>
        <taxon>Oryza sativa</taxon>
    </lineage>
</organism>
<gene>
    <name type="primary">OAT</name>
    <name type="ordered locus">Os03g0643300</name>
    <name type="ordered locus">LOC_Os03g44150</name>
    <name type="ORF">OSJNBa0038E17.15</name>
</gene>
<dbReference type="EC" id="2.6.1.13"/>
<dbReference type="EMBL" id="AC145383">
    <property type="protein sequence ID" value="AAU90265.1"/>
    <property type="status" value="ALT_SEQ"/>
    <property type="molecule type" value="Genomic_DNA"/>
</dbReference>
<dbReference type="EMBL" id="DP000009">
    <property type="protein sequence ID" value="ABF97848.1"/>
    <property type="molecule type" value="Genomic_DNA"/>
</dbReference>
<dbReference type="EMBL" id="AP008209">
    <property type="protein sequence ID" value="BAF12667.1"/>
    <property type="molecule type" value="Genomic_DNA"/>
</dbReference>
<dbReference type="EMBL" id="AP014959">
    <property type="protein sequence ID" value="BAS85449.1"/>
    <property type="molecule type" value="Genomic_DNA"/>
</dbReference>
<dbReference type="EMBL" id="AK099445">
    <property type="protein sequence ID" value="BAG94132.1"/>
    <property type="molecule type" value="mRNA"/>
</dbReference>
<dbReference type="RefSeq" id="XP_015630389.1">
    <property type="nucleotide sequence ID" value="XM_015774903.1"/>
</dbReference>
<dbReference type="SMR" id="Q10G56"/>
<dbReference type="FunCoup" id="Q10G56">
    <property type="interactions" value="2183"/>
</dbReference>
<dbReference type="STRING" id="39947.Q10G56"/>
<dbReference type="PaxDb" id="39947-Q10G56"/>
<dbReference type="EnsemblPlants" id="Os03t0643300-02">
    <property type="protein sequence ID" value="Os03t0643300-02"/>
    <property type="gene ID" value="Os03g0643300"/>
</dbReference>
<dbReference type="Gramene" id="Os03t0643300-02">
    <property type="protein sequence ID" value="Os03t0643300-02"/>
    <property type="gene ID" value="Os03g0643300"/>
</dbReference>
<dbReference type="KEGG" id="dosa:Os03g0643300"/>
<dbReference type="eggNOG" id="KOG1402">
    <property type="taxonomic scope" value="Eukaryota"/>
</dbReference>
<dbReference type="HOGENOM" id="CLU_016922_10_3_1"/>
<dbReference type="InParanoid" id="Q10G56"/>
<dbReference type="OMA" id="VCEGNFH"/>
<dbReference type="OrthoDB" id="10261433at2759"/>
<dbReference type="PlantReactome" id="R-OSA-1119289">
    <property type="pathway name" value="Arginine degradation"/>
</dbReference>
<dbReference type="PlantReactome" id="R-OSA-1119318">
    <property type="pathway name" value="Proline biosynthesis V (from arginine)"/>
</dbReference>
<dbReference type="PlantReactome" id="R-OSA-1119495">
    <property type="pathway name" value="Citrulline biosynthesis"/>
</dbReference>
<dbReference type="PlantReactome" id="R-OSA-1119610">
    <property type="pathway name" value="Biotin biosynthesis II"/>
</dbReference>
<dbReference type="UniPathway" id="UPA00098">
    <property type="reaction ID" value="UER00358"/>
</dbReference>
<dbReference type="Proteomes" id="UP000000763">
    <property type="component" value="Chromosome 3"/>
</dbReference>
<dbReference type="Proteomes" id="UP000059680">
    <property type="component" value="Chromosome 3"/>
</dbReference>
<dbReference type="GO" id="GO:0005737">
    <property type="term" value="C:cytoplasm"/>
    <property type="evidence" value="ECO:0000318"/>
    <property type="project" value="GO_Central"/>
</dbReference>
<dbReference type="GO" id="GO:0005759">
    <property type="term" value="C:mitochondrial matrix"/>
    <property type="evidence" value="ECO:0007669"/>
    <property type="project" value="UniProtKB-SubCell"/>
</dbReference>
<dbReference type="GO" id="GO:0042802">
    <property type="term" value="F:identical protein binding"/>
    <property type="evidence" value="ECO:0000318"/>
    <property type="project" value="GO_Central"/>
</dbReference>
<dbReference type="GO" id="GO:0004587">
    <property type="term" value="F:ornithine aminotransferase activity"/>
    <property type="evidence" value="ECO:0000318"/>
    <property type="project" value="GO_Central"/>
</dbReference>
<dbReference type="GO" id="GO:0030170">
    <property type="term" value="F:pyridoxal phosphate binding"/>
    <property type="evidence" value="ECO:0000318"/>
    <property type="project" value="GO_Central"/>
</dbReference>
<dbReference type="GO" id="GO:0019544">
    <property type="term" value="P:arginine catabolic process to glutamate"/>
    <property type="evidence" value="ECO:0000318"/>
    <property type="project" value="GO_Central"/>
</dbReference>
<dbReference type="GO" id="GO:0010121">
    <property type="term" value="P:arginine catabolic process to proline via ornithine"/>
    <property type="evidence" value="ECO:0000318"/>
    <property type="project" value="GO_Central"/>
</dbReference>
<dbReference type="GO" id="GO:0055129">
    <property type="term" value="P:L-proline biosynthetic process"/>
    <property type="evidence" value="ECO:0007669"/>
    <property type="project" value="UniProtKB-UniPathway"/>
</dbReference>
<dbReference type="GO" id="GO:0009737">
    <property type="term" value="P:response to abscisic acid"/>
    <property type="evidence" value="ECO:0000270"/>
    <property type="project" value="UniProtKB"/>
</dbReference>
<dbReference type="GO" id="GO:0009733">
    <property type="term" value="P:response to auxin"/>
    <property type="evidence" value="ECO:0000270"/>
    <property type="project" value="UniProtKB"/>
</dbReference>
<dbReference type="GO" id="GO:0009741">
    <property type="term" value="P:response to brassinosteroid"/>
    <property type="evidence" value="ECO:0000270"/>
    <property type="project" value="UniProtKB"/>
</dbReference>
<dbReference type="GO" id="GO:0009413">
    <property type="term" value="P:response to flooding"/>
    <property type="evidence" value="ECO:0000270"/>
    <property type="project" value="UniProtKB"/>
</dbReference>
<dbReference type="GO" id="GO:0009408">
    <property type="term" value="P:response to heat"/>
    <property type="evidence" value="ECO:0000270"/>
    <property type="project" value="UniProtKB"/>
</dbReference>
<dbReference type="GO" id="GO:0009753">
    <property type="term" value="P:response to jasmonic acid"/>
    <property type="evidence" value="ECO:0000270"/>
    <property type="project" value="UniProtKB"/>
</dbReference>
<dbReference type="GO" id="GO:0006979">
    <property type="term" value="P:response to oxidative stress"/>
    <property type="evidence" value="ECO:0000315"/>
    <property type="project" value="UniProtKB"/>
</dbReference>
<dbReference type="GO" id="GO:0009651">
    <property type="term" value="P:response to salt stress"/>
    <property type="evidence" value="ECO:0000270"/>
    <property type="project" value="UniProtKB"/>
</dbReference>
<dbReference type="GO" id="GO:0009414">
    <property type="term" value="P:response to water deprivation"/>
    <property type="evidence" value="ECO:0000315"/>
    <property type="project" value="UniProtKB"/>
</dbReference>
<dbReference type="CDD" id="cd00610">
    <property type="entry name" value="OAT_like"/>
    <property type="match status" value="1"/>
</dbReference>
<dbReference type="FunFam" id="3.40.640.10:FF:000011">
    <property type="entry name" value="Ornithine aminotransferase"/>
    <property type="match status" value="1"/>
</dbReference>
<dbReference type="FunFam" id="3.90.1150.10:FF:000152">
    <property type="entry name" value="Ornithine aminotransferase"/>
    <property type="match status" value="1"/>
</dbReference>
<dbReference type="Gene3D" id="3.90.1150.10">
    <property type="entry name" value="Aspartate Aminotransferase, domain 1"/>
    <property type="match status" value="1"/>
</dbReference>
<dbReference type="Gene3D" id="3.40.640.10">
    <property type="entry name" value="Type I PLP-dependent aspartate aminotransferase-like (Major domain)"/>
    <property type="match status" value="1"/>
</dbReference>
<dbReference type="InterPro" id="IPR005814">
    <property type="entry name" value="Aminotrans_3"/>
</dbReference>
<dbReference type="InterPro" id="IPR049704">
    <property type="entry name" value="Aminotrans_3_PPA_site"/>
</dbReference>
<dbReference type="InterPro" id="IPR050103">
    <property type="entry name" value="Class-III_PLP-dep_AT"/>
</dbReference>
<dbReference type="InterPro" id="IPR010164">
    <property type="entry name" value="Orn_aminotrans"/>
</dbReference>
<dbReference type="InterPro" id="IPR015424">
    <property type="entry name" value="PyrdxlP-dep_Trfase"/>
</dbReference>
<dbReference type="InterPro" id="IPR015421">
    <property type="entry name" value="PyrdxlP-dep_Trfase_major"/>
</dbReference>
<dbReference type="InterPro" id="IPR015422">
    <property type="entry name" value="PyrdxlP-dep_Trfase_small"/>
</dbReference>
<dbReference type="NCBIfam" id="TIGR01885">
    <property type="entry name" value="Orn_aminotrans"/>
    <property type="match status" value="1"/>
</dbReference>
<dbReference type="PANTHER" id="PTHR11986">
    <property type="entry name" value="AMINOTRANSFERASE CLASS III"/>
    <property type="match status" value="1"/>
</dbReference>
<dbReference type="PANTHER" id="PTHR11986:SF18">
    <property type="entry name" value="ORNITHINE AMINOTRANSFERASE, MITOCHONDRIAL"/>
    <property type="match status" value="1"/>
</dbReference>
<dbReference type="Pfam" id="PF00202">
    <property type="entry name" value="Aminotran_3"/>
    <property type="match status" value="1"/>
</dbReference>
<dbReference type="PIRSF" id="PIRSF000521">
    <property type="entry name" value="Transaminase_4ab_Lys_Orn"/>
    <property type="match status" value="1"/>
</dbReference>
<dbReference type="SUPFAM" id="SSF53383">
    <property type="entry name" value="PLP-dependent transferases"/>
    <property type="match status" value="1"/>
</dbReference>
<dbReference type="PROSITE" id="PS00600">
    <property type="entry name" value="AA_TRANSFER_CLASS_3"/>
    <property type="match status" value="1"/>
</dbReference>
<sequence length="473" mass="51442">MAAALARRGGGGLARALARGRGMCSATAAERAAGAALTSEELMRMERERSAHNYHPIPVVFSKGEGSHILDPEGNKYIDFLSAYSAVNQGHCHPKVLRALKEQAERLTLSSRAFYNDKFPIFAEYLTSMFGYEMMLPMNTGAEGVETAIKLVRKWGYEKKKIPKNEALIVSCCGCFHGRTLGVISMSCDNDATRGFGPLVPGHLKVDFGDTDGLEKIFKDHGERICGFLFEPIQGEAGVIIPPDGYLKAVRDLCSRHNILMIADEIQTGIARTGKMLACDWENIRPDVVILGKALGAGVVPVSAVLADKDIMLCIKPGEHGSTFGGNPLASAVAVASLKVVTDEGLVERAAKLGQEFRDQLQKVQQRFPQIIREVRGRGLLNAVDLSNEALSPASAYDICIKLKERGVLAKPTHDTIIRLAPPLSISPEELAEASKAFSDVLEHDLPQLQKQIKKTESAAEKQSCDRCGRDLY</sequence>
<reference key="1">
    <citation type="journal article" date="2005" name="Genome Res.">
        <title>Sequence, annotation, and analysis of synteny between rice chromosome 3 and diverged grass species.</title>
        <authorList>
            <consortium name="The rice chromosome 3 sequencing consortium"/>
            <person name="Buell C.R."/>
            <person name="Yuan Q."/>
            <person name="Ouyang S."/>
            <person name="Liu J."/>
            <person name="Zhu W."/>
            <person name="Wang A."/>
            <person name="Maiti R."/>
            <person name="Haas B."/>
            <person name="Wortman J."/>
            <person name="Pertea M."/>
            <person name="Jones K.M."/>
            <person name="Kim M."/>
            <person name="Overton L."/>
            <person name="Tsitrin T."/>
            <person name="Fadrosh D."/>
            <person name="Bera J."/>
            <person name="Weaver B."/>
            <person name="Jin S."/>
            <person name="Johri S."/>
            <person name="Reardon M."/>
            <person name="Webb K."/>
            <person name="Hill J."/>
            <person name="Moffat K."/>
            <person name="Tallon L."/>
            <person name="Van Aken S."/>
            <person name="Lewis M."/>
            <person name="Utterback T."/>
            <person name="Feldblyum T."/>
            <person name="Zismann V."/>
            <person name="Iobst S."/>
            <person name="Hsiao J."/>
            <person name="de Vazeille A.R."/>
            <person name="Salzberg S.L."/>
            <person name="White O."/>
            <person name="Fraser C.M."/>
            <person name="Yu Y."/>
            <person name="Kim H."/>
            <person name="Rambo T."/>
            <person name="Currie J."/>
            <person name="Collura K."/>
            <person name="Kernodle-Thompson S."/>
            <person name="Wei F."/>
            <person name="Kudrna K."/>
            <person name="Ammiraju J.S.S."/>
            <person name="Luo M."/>
            <person name="Goicoechea J.L."/>
            <person name="Wing R.A."/>
            <person name="Henry D."/>
            <person name="Oates R."/>
            <person name="Palmer M."/>
            <person name="Pries G."/>
            <person name="Saski C."/>
            <person name="Simmons J."/>
            <person name="Soderlund C."/>
            <person name="Nelson W."/>
            <person name="de la Bastide M."/>
            <person name="Spiegel L."/>
            <person name="Nascimento L."/>
            <person name="Huang E."/>
            <person name="Preston R."/>
            <person name="Zutavern T."/>
            <person name="Palmer L."/>
            <person name="O'Shaughnessy A."/>
            <person name="Dike S."/>
            <person name="McCombie W.R."/>
            <person name="Minx P."/>
            <person name="Cordum H."/>
            <person name="Wilson R."/>
            <person name="Jin W."/>
            <person name="Lee H.R."/>
            <person name="Jiang J."/>
            <person name="Jackson S."/>
        </authorList>
    </citation>
    <scope>NUCLEOTIDE SEQUENCE [LARGE SCALE GENOMIC DNA]</scope>
    <source>
        <strain>cv. Nipponbare</strain>
    </source>
</reference>
<reference key="2">
    <citation type="journal article" date="2005" name="Nature">
        <title>The map-based sequence of the rice genome.</title>
        <authorList>
            <consortium name="International rice genome sequencing project (IRGSP)"/>
        </authorList>
    </citation>
    <scope>NUCLEOTIDE SEQUENCE [LARGE SCALE GENOMIC DNA]</scope>
    <source>
        <strain>cv. Nipponbare</strain>
    </source>
</reference>
<reference key="3">
    <citation type="journal article" date="2008" name="Nucleic Acids Res.">
        <title>The rice annotation project database (RAP-DB): 2008 update.</title>
        <authorList>
            <consortium name="The rice annotation project (RAP)"/>
        </authorList>
    </citation>
    <scope>GENOME REANNOTATION</scope>
    <source>
        <strain>cv. Nipponbare</strain>
    </source>
</reference>
<reference key="4">
    <citation type="journal article" date="2013" name="Rice">
        <title>Improvement of the Oryza sativa Nipponbare reference genome using next generation sequence and optical map data.</title>
        <authorList>
            <person name="Kawahara Y."/>
            <person name="de la Bastide M."/>
            <person name="Hamilton J.P."/>
            <person name="Kanamori H."/>
            <person name="McCombie W.R."/>
            <person name="Ouyang S."/>
            <person name="Schwartz D.C."/>
            <person name="Tanaka T."/>
            <person name="Wu J."/>
            <person name="Zhou S."/>
            <person name="Childs K.L."/>
            <person name="Davidson R.M."/>
            <person name="Lin H."/>
            <person name="Quesada-Ocampo L."/>
            <person name="Vaillancourt B."/>
            <person name="Sakai H."/>
            <person name="Lee S.S."/>
            <person name="Kim J."/>
            <person name="Numa H."/>
            <person name="Itoh T."/>
            <person name="Buell C.R."/>
            <person name="Matsumoto T."/>
        </authorList>
    </citation>
    <scope>GENOME REANNOTATION</scope>
    <source>
        <strain>cv. Nipponbare</strain>
    </source>
</reference>
<reference key="5">
    <citation type="journal article" date="2003" name="Science">
        <title>Collection, mapping, and annotation of over 28,000 cDNA clones from japonica rice.</title>
        <authorList>
            <consortium name="The rice full-length cDNA consortium"/>
        </authorList>
    </citation>
    <scope>NUCLEOTIDE SEQUENCE [LARGE SCALE MRNA]</scope>
    <source>
        <strain>cv. Nipponbare</strain>
    </source>
</reference>
<reference key="6">
    <citation type="journal article" date="2012" name="Plant Sci.">
        <title>An ornithine delta-aminotransferase gene OsOAT confers drought and oxidative stress tolerance in rice.</title>
        <authorList>
            <person name="You J."/>
            <person name="Hu H."/>
            <person name="Xiong L."/>
        </authorList>
    </citation>
    <scope>FUNCTION</scope>
    <scope>INDUCTION</scope>
</reference>
<evidence type="ECO:0000250" key="1"/>
<evidence type="ECO:0000255" key="2"/>
<evidence type="ECO:0000269" key="3">
    <source>
    </source>
</evidence>
<evidence type="ECO:0000305" key="4"/>